<proteinExistence type="inferred from homology"/>
<reference key="1">
    <citation type="journal article" date="2007" name="Proc. Natl. Acad. Sci. U.S.A.">
        <title>Genome sequencing reveals complex secondary metabolome in the marine actinomycete Salinispora tropica.</title>
        <authorList>
            <person name="Udwary D.W."/>
            <person name="Zeigler L."/>
            <person name="Asolkar R.N."/>
            <person name="Singan V."/>
            <person name="Lapidus A."/>
            <person name="Fenical W."/>
            <person name="Jensen P.R."/>
            <person name="Moore B.S."/>
        </authorList>
    </citation>
    <scope>NUCLEOTIDE SEQUENCE [LARGE SCALE GENOMIC DNA]</scope>
    <source>
        <strain>ATCC BAA-916 / DSM 44818 / JCM 13857 / NBRC 105044 / CNB-440</strain>
    </source>
</reference>
<gene>
    <name evidence="1" type="primary">rpsN</name>
    <name type="ordered locus">Strop_2853</name>
</gene>
<accession>A4X8U4</accession>
<comment type="function">
    <text evidence="1">Binds 16S rRNA, required for the assembly of 30S particles and may also be responsible for determining the conformation of the 16S rRNA at the A site.</text>
</comment>
<comment type="subunit">
    <text evidence="1">Part of the 30S ribosomal subunit. Contacts proteins S3 and S10.</text>
</comment>
<comment type="similarity">
    <text evidence="1">Belongs to the universal ribosomal protein uS14 family.</text>
</comment>
<protein>
    <recommendedName>
        <fullName evidence="1">Small ribosomal subunit protein uS14A</fullName>
    </recommendedName>
    <alternativeName>
        <fullName evidence="2">30S ribosomal protein S14</fullName>
    </alternativeName>
</protein>
<evidence type="ECO:0000255" key="1">
    <source>
        <dbReference type="HAMAP-Rule" id="MF_00537"/>
    </source>
</evidence>
<evidence type="ECO:0000305" key="2"/>
<organism>
    <name type="scientific">Salinispora tropica (strain ATCC BAA-916 / DSM 44818 / JCM 13857 / NBRC 105044 / CNB-440)</name>
    <dbReference type="NCBI Taxonomy" id="369723"/>
    <lineage>
        <taxon>Bacteria</taxon>
        <taxon>Bacillati</taxon>
        <taxon>Actinomycetota</taxon>
        <taxon>Actinomycetes</taxon>
        <taxon>Micromonosporales</taxon>
        <taxon>Micromonosporaceae</taxon>
        <taxon>Salinispora</taxon>
    </lineage>
</organism>
<sequence length="101" mass="11744">MARRSLSNRQARREELVARHADRRAELKRLIAHPDTDPDVRADAVRQLARLPRDSSPVRLRNRDVIDGRPRGVLTRFGLSRVRFREMALRGELPGIRKASW</sequence>
<name>RS14_SALTO</name>
<dbReference type="EMBL" id="CP000667">
    <property type="protein sequence ID" value="ABP55294.1"/>
    <property type="molecule type" value="Genomic_DNA"/>
</dbReference>
<dbReference type="RefSeq" id="WP_012014073.1">
    <property type="nucleotide sequence ID" value="NC_009380.1"/>
</dbReference>
<dbReference type="SMR" id="A4X8U4"/>
<dbReference type="STRING" id="369723.Strop_2853"/>
<dbReference type="KEGG" id="stp:Strop_2853"/>
<dbReference type="PATRIC" id="fig|369723.5.peg.2939"/>
<dbReference type="eggNOG" id="COG0199">
    <property type="taxonomic scope" value="Bacteria"/>
</dbReference>
<dbReference type="HOGENOM" id="CLU_139869_0_1_11"/>
<dbReference type="Proteomes" id="UP000000235">
    <property type="component" value="Chromosome"/>
</dbReference>
<dbReference type="GO" id="GO:0015935">
    <property type="term" value="C:small ribosomal subunit"/>
    <property type="evidence" value="ECO:0007669"/>
    <property type="project" value="TreeGrafter"/>
</dbReference>
<dbReference type="GO" id="GO:0019843">
    <property type="term" value="F:rRNA binding"/>
    <property type="evidence" value="ECO:0007669"/>
    <property type="project" value="UniProtKB-UniRule"/>
</dbReference>
<dbReference type="GO" id="GO:0003735">
    <property type="term" value="F:structural constituent of ribosome"/>
    <property type="evidence" value="ECO:0007669"/>
    <property type="project" value="InterPro"/>
</dbReference>
<dbReference type="GO" id="GO:0006412">
    <property type="term" value="P:translation"/>
    <property type="evidence" value="ECO:0007669"/>
    <property type="project" value="UniProtKB-UniRule"/>
</dbReference>
<dbReference type="FunFam" id="1.10.287.1480:FF:000001">
    <property type="entry name" value="30S ribosomal protein S14"/>
    <property type="match status" value="1"/>
</dbReference>
<dbReference type="Gene3D" id="1.10.287.1480">
    <property type="match status" value="1"/>
</dbReference>
<dbReference type="HAMAP" id="MF_00537">
    <property type="entry name" value="Ribosomal_uS14_1"/>
    <property type="match status" value="1"/>
</dbReference>
<dbReference type="InterPro" id="IPR001209">
    <property type="entry name" value="Ribosomal_uS14"/>
</dbReference>
<dbReference type="InterPro" id="IPR023036">
    <property type="entry name" value="Ribosomal_uS14_bac/plastid"/>
</dbReference>
<dbReference type="NCBIfam" id="NF006477">
    <property type="entry name" value="PRK08881.1"/>
    <property type="match status" value="1"/>
</dbReference>
<dbReference type="PANTHER" id="PTHR19836">
    <property type="entry name" value="30S RIBOSOMAL PROTEIN S14"/>
    <property type="match status" value="1"/>
</dbReference>
<dbReference type="PANTHER" id="PTHR19836:SF23">
    <property type="entry name" value="SMALL RIBOSOMAL SUBUNIT PROTEIN US14A"/>
    <property type="match status" value="1"/>
</dbReference>
<dbReference type="Pfam" id="PF00253">
    <property type="entry name" value="Ribosomal_S14"/>
    <property type="match status" value="1"/>
</dbReference>
<dbReference type="SUPFAM" id="SSF57716">
    <property type="entry name" value="Glucocorticoid receptor-like (DNA-binding domain)"/>
    <property type="match status" value="1"/>
</dbReference>
<keyword id="KW-1185">Reference proteome</keyword>
<keyword id="KW-0687">Ribonucleoprotein</keyword>
<keyword id="KW-0689">Ribosomal protein</keyword>
<keyword id="KW-0694">RNA-binding</keyword>
<keyword id="KW-0699">rRNA-binding</keyword>
<feature type="chain" id="PRO_1000128567" description="Small ribosomal subunit protein uS14A">
    <location>
        <begin position="1"/>
        <end position="101"/>
    </location>
</feature>